<accession>A1SRP6</accession>
<comment type="function">
    <text evidence="1">Regulates arginine biosynthesis genes.</text>
</comment>
<comment type="pathway">
    <text>Amino-acid biosynthesis; L-arginine biosynthesis [regulation].</text>
</comment>
<comment type="subcellular location">
    <subcellularLocation>
        <location evidence="1">Cytoplasm</location>
    </subcellularLocation>
</comment>
<comment type="similarity">
    <text evidence="1">Belongs to the ArgR family.</text>
</comment>
<feature type="chain" id="PRO_1000023585" description="Arginine repressor">
    <location>
        <begin position="1"/>
        <end position="150"/>
    </location>
</feature>
<reference key="1">
    <citation type="journal article" date="2008" name="BMC Genomics">
        <title>Genomics of an extreme psychrophile, Psychromonas ingrahamii.</title>
        <authorList>
            <person name="Riley M."/>
            <person name="Staley J.T."/>
            <person name="Danchin A."/>
            <person name="Wang T.Z."/>
            <person name="Brettin T.S."/>
            <person name="Hauser L.J."/>
            <person name="Land M.L."/>
            <person name="Thompson L.S."/>
        </authorList>
    </citation>
    <scope>NUCLEOTIDE SEQUENCE [LARGE SCALE GENOMIC DNA]</scope>
    <source>
        <strain>DSM 17664 / CCUG 51855 / 37</strain>
    </source>
</reference>
<gene>
    <name evidence="1" type="primary">argR</name>
    <name type="ordered locus">Ping_0295</name>
</gene>
<organism>
    <name type="scientific">Psychromonas ingrahamii (strain DSM 17664 / CCUG 51855 / 37)</name>
    <dbReference type="NCBI Taxonomy" id="357804"/>
    <lineage>
        <taxon>Bacteria</taxon>
        <taxon>Pseudomonadati</taxon>
        <taxon>Pseudomonadota</taxon>
        <taxon>Gammaproteobacteria</taxon>
        <taxon>Alteromonadales</taxon>
        <taxon>Psychromonadaceae</taxon>
        <taxon>Psychromonas</taxon>
    </lineage>
</organism>
<keyword id="KW-0028">Amino-acid biosynthesis</keyword>
<keyword id="KW-0055">Arginine biosynthesis</keyword>
<keyword id="KW-0963">Cytoplasm</keyword>
<keyword id="KW-0238">DNA-binding</keyword>
<keyword id="KW-1185">Reference proteome</keyword>
<keyword id="KW-0678">Repressor</keyword>
<keyword id="KW-0804">Transcription</keyword>
<keyword id="KW-0805">Transcription regulation</keyword>
<proteinExistence type="inferred from homology"/>
<protein>
    <recommendedName>
        <fullName evidence="1">Arginine repressor</fullName>
    </recommendedName>
</protein>
<dbReference type="EMBL" id="CP000510">
    <property type="protein sequence ID" value="ABM02161.1"/>
    <property type="molecule type" value="Genomic_DNA"/>
</dbReference>
<dbReference type="RefSeq" id="WP_011768720.1">
    <property type="nucleotide sequence ID" value="NC_008709.1"/>
</dbReference>
<dbReference type="SMR" id="A1SRP6"/>
<dbReference type="STRING" id="357804.Ping_0295"/>
<dbReference type="KEGG" id="pin:Ping_0295"/>
<dbReference type="eggNOG" id="COG1438">
    <property type="taxonomic scope" value="Bacteria"/>
</dbReference>
<dbReference type="HOGENOM" id="CLU_097103_2_0_6"/>
<dbReference type="OrthoDB" id="7060358at2"/>
<dbReference type="UniPathway" id="UPA00068"/>
<dbReference type="Proteomes" id="UP000000639">
    <property type="component" value="Chromosome"/>
</dbReference>
<dbReference type="GO" id="GO:0005737">
    <property type="term" value="C:cytoplasm"/>
    <property type="evidence" value="ECO:0007669"/>
    <property type="project" value="UniProtKB-SubCell"/>
</dbReference>
<dbReference type="GO" id="GO:0034618">
    <property type="term" value="F:arginine binding"/>
    <property type="evidence" value="ECO:0007669"/>
    <property type="project" value="InterPro"/>
</dbReference>
<dbReference type="GO" id="GO:0003677">
    <property type="term" value="F:DNA binding"/>
    <property type="evidence" value="ECO:0007669"/>
    <property type="project" value="UniProtKB-KW"/>
</dbReference>
<dbReference type="GO" id="GO:0003700">
    <property type="term" value="F:DNA-binding transcription factor activity"/>
    <property type="evidence" value="ECO:0007669"/>
    <property type="project" value="UniProtKB-UniRule"/>
</dbReference>
<dbReference type="GO" id="GO:0006526">
    <property type="term" value="P:L-arginine biosynthetic process"/>
    <property type="evidence" value="ECO:0007669"/>
    <property type="project" value="UniProtKB-UniPathway"/>
</dbReference>
<dbReference type="GO" id="GO:0051259">
    <property type="term" value="P:protein complex oligomerization"/>
    <property type="evidence" value="ECO:0007669"/>
    <property type="project" value="InterPro"/>
</dbReference>
<dbReference type="GO" id="GO:1900079">
    <property type="term" value="P:regulation of arginine biosynthetic process"/>
    <property type="evidence" value="ECO:0007669"/>
    <property type="project" value="UniProtKB-UniRule"/>
</dbReference>
<dbReference type="Gene3D" id="3.30.1360.40">
    <property type="match status" value="1"/>
</dbReference>
<dbReference type="Gene3D" id="1.10.10.10">
    <property type="entry name" value="Winged helix-like DNA-binding domain superfamily/Winged helix DNA-binding domain"/>
    <property type="match status" value="1"/>
</dbReference>
<dbReference type="HAMAP" id="MF_00173">
    <property type="entry name" value="Arg_repressor"/>
    <property type="match status" value="1"/>
</dbReference>
<dbReference type="InterPro" id="IPR001669">
    <property type="entry name" value="Arg_repress"/>
</dbReference>
<dbReference type="InterPro" id="IPR020899">
    <property type="entry name" value="Arg_repress_C"/>
</dbReference>
<dbReference type="InterPro" id="IPR036251">
    <property type="entry name" value="Arg_repress_C_sf"/>
</dbReference>
<dbReference type="InterPro" id="IPR020900">
    <property type="entry name" value="Arg_repress_DNA-bd"/>
</dbReference>
<dbReference type="InterPro" id="IPR036388">
    <property type="entry name" value="WH-like_DNA-bd_sf"/>
</dbReference>
<dbReference type="InterPro" id="IPR036390">
    <property type="entry name" value="WH_DNA-bd_sf"/>
</dbReference>
<dbReference type="NCBIfam" id="TIGR01529">
    <property type="entry name" value="argR_whole"/>
    <property type="match status" value="1"/>
</dbReference>
<dbReference type="NCBIfam" id="NF003457">
    <property type="entry name" value="PRK05066.1"/>
    <property type="match status" value="1"/>
</dbReference>
<dbReference type="PANTHER" id="PTHR34471">
    <property type="entry name" value="ARGININE REPRESSOR"/>
    <property type="match status" value="1"/>
</dbReference>
<dbReference type="PANTHER" id="PTHR34471:SF1">
    <property type="entry name" value="ARGININE REPRESSOR"/>
    <property type="match status" value="1"/>
</dbReference>
<dbReference type="Pfam" id="PF01316">
    <property type="entry name" value="Arg_repressor"/>
    <property type="match status" value="1"/>
</dbReference>
<dbReference type="Pfam" id="PF02863">
    <property type="entry name" value="Arg_repressor_C"/>
    <property type="match status" value="1"/>
</dbReference>
<dbReference type="PRINTS" id="PR01467">
    <property type="entry name" value="ARGREPRESSOR"/>
</dbReference>
<dbReference type="SUPFAM" id="SSF55252">
    <property type="entry name" value="C-terminal domain of arginine repressor"/>
    <property type="match status" value="1"/>
</dbReference>
<dbReference type="SUPFAM" id="SSF46785">
    <property type="entry name" value="Winged helix' DNA-binding domain"/>
    <property type="match status" value="1"/>
</dbReference>
<name>ARGR_PSYIN</name>
<sequence length="150" mass="16512">MKQSTELMTFFKALLEKEHFSSQGEIVEALVNAGFNNINQSKVSRMLSKSGAVRTRNAKQEMLYCLPAELGIPIITSPLKNLVLDIDRNDSMIVIRTSPGAAQLIARLLDSIGKTEGILGNIAGDDTIFTTPTNSKKIQETMNIIKNLFN</sequence>
<evidence type="ECO:0000255" key="1">
    <source>
        <dbReference type="HAMAP-Rule" id="MF_00173"/>
    </source>
</evidence>